<protein>
    <recommendedName>
        <fullName evidence="1">Small ribosomal subunit protein bS20</fullName>
    </recommendedName>
    <alternativeName>
        <fullName evidence="3">30S ribosomal protein S20</fullName>
    </alternativeName>
</protein>
<evidence type="ECO:0000255" key="1">
    <source>
        <dbReference type="HAMAP-Rule" id="MF_00500"/>
    </source>
</evidence>
<evidence type="ECO:0000256" key="2">
    <source>
        <dbReference type="SAM" id="MobiDB-lite"/>
    </source>
</evidence>
<evidence type="ECO:0000305" key="3"/>
<comment type="function">
    <text evidence="1">Binds directly to 16S ribosomal RNA.</text>
</comment>
<comment type="similarity">
    <text evidence="1">Belongs to the bacterial ribosomal protein bS20 family.</text>
</comment>
<organism>
    <name type="scientific">Pectobacterium atrosepticum (strain SCRI 1043 / ATCC BAA-672)</name>
    <name type="common">Erwinia carotovora subsp. atroseptica</name>
    <dbReference type="NCBI Taxonomy" id="218491"/>
    <lineage>
        <taxon>Bacteria</taxon>
        <taxon>Pseudomonadati</taxon>
        <taxon>Pseudomonadota</taxon>
        <taxon>Gammaproteobacteria</taxon>
        <taxon>Enterobacterales</taxon>
        <taxon>Pectobacteriaceae</taxon>
        <taxon>Pectobacterium</taxon>
    </lineage>
</organism>
<sequence length="87" mass="9806">MANIKSAKKRAVQSEKRRKHNASSRSMMRTFIKKVYAAIATGDKEVAQKAFNDMQPIVDRQASKGLIHKNKAARHKSNLVARINAMQ</sequence>
<keyword id="KW-1185">Reference proteome</keyword>
<keyword id="KW-0687">Ribonucleoprotein</keyword>
<keyword id="KW-0689">Ribosomal protein</keyword>
<keyword id="KW-0694">RNA-binding</keyword>
<keyword id="KW-0699">rRNA-binding</keyword>
<dbReference type="EMBL" id="BX950851">
    <property type="protein sequence ID" value="CAG76776.1"/>
    <property type="molecule type" value="Genomic_DNA"/>
</dbReference>
<dbReference type="RefSeq" id="WP_011095376.1">
    <property type="nucleotide sequence ID" value="NC_004547.2"/>
</dbReference>
<dbReference type="SMR" id="Q6D0C1"/>
<dbReference type="STRING" id="218491.ECA3878"/>
<dbReference type="GeneID" id="57210495"/>
<dbReference type="KEGG" id="eca:ECA3878"/>
<dbReference type="PATRIC" id="fig|218491.5.peg.3935"/>
<dbReference type="eggNOG" id="COG0268">
    <property type="taxonomic scope" value="Bacteria"/>
</dbReference>
<dbReference type="HOGENOM" id="CLU_160655_4_0_6"/>
<dbReference type="OrthoDB" id="9807974at2"/>
<dbReference type="Proteomes" id="UP000007966">
    <property type="component" value="Chromosome"/>
</dbReference>
<dbReference type="GO" id="GO:0005829">
    <property type="term" value="C:cytosol"/>
    <property type="evidence" value="ECO:0007669"/>
    <property type="project" value="TreeGrafter"/>
</dbReference>
<dbReference type="GO" id="GO:0015935">
    <property type="term" value="C:small ribosomal subunit"/>
    <property type="evidence" value="ECO:0007669"/>
    <property type="project" value="TreeGrafter"/>
</dbReference>
<dbReference type="GO" id="GO:0070181">
    <property type="term" value="F:small ribosomal subunit rRNA binding"/>
    <property type="evidence" value="ECO:0007669"/>
    <property type="project" value="TreeGrafter"/>
</dbReference>
<dbReference type="GO" id="GO:0003735">
    <property type="term" value="F:structural constituent of ribosome"/>
    <property type="evidence" value="ECO:0007669"/>
    <property type="project" value="InterPro"/>
</dbReference>
<dbReference type="GO" id="GO:0006412">
    <property type="term" value="P:translation"/>
    <property type="evidence" value="ECO:0007669"/>
    <property type="project" value="UniProtKB-UniRule"/>
</dbReference>
<dbReference type="FunFam" id="1.20.58.110:FF:000001">
    <property type="entry name" value="30S ribosomal protein S20"/>
    <property type="match status" value="1"/>
</dbReference>
<dbReference type="Gene3D" id="1.20.58.110">
    <property type="entry name" value="Ribosomal protein S20"/>
    <property type="match status" value="1"/>
</dbReference>
<dbReference type="HAMAP" id="MF_00500">
    <property type="entry name" value="Ribosomal_bS20"/>
    <property type="match status" value="1"/>
</dbReference>
<dbReference type="InterPro" id="IPR002583">
    <property type="entry name" value="Ribosomal_bS20"/>
</dbReference>
<dbReference type="InterPro" id="IPR036510">
    <property type="entry name" value="Ribosomal_bS20_sf"/>
</dbReference>
<dbReference type="NCBIfam" id="TIGR00029">
    <property type="entry name" value="S20"/>
    <property type="match status" value="1"/>
</dbReference>
<dbReference type="PANTHER" id="PTHR33398">
    <property type="entry name" value="30S RIBOSOMAL PROTEIN S20"/>
    <property type="match status" value="1"/>
</dbReference>
<dbReference type="PANTHER" id="PTHR33398:SF1">
    <property type="entry name" value="SMALL RIBOSOMAL SUBUNIT PROTEIN BS20C"/>
    <property type="match status" value="1"/>
</dbReference>
<dbReference type="Pfam" id="PF01649">
    <property type="entry name" value="Ribosomal_S20p"/>
    <property type="match status" value="1"/>
</dbReference>
<dbReference type="SUPFAM" id="SSF46992">
    <property type="entry name" value="Ribosomal protein S20"/>
    <property type="match status" value="1"/>
</dbReference>
<accession>Q6D0C1</accession>
<proteinExistence type="inferred from homology"/>
<gene>
    <name evidence="1" type="primary">rpsT</name>
    <name type="ordered locus">ECA3878</name>
</gene>
<feature type="chain" id="PRO_0000167961" description="Small ribosomal subunit protein bS20">
    <location>
        <begin position="1"/>
        <end position="87"/>
    </location>
</feature>
<feature type="region of interest" description="Disordered" evidence="2">
    <location>
        <begin position="1"/>
        <end position="27"/>
    </location>
</feature>
<feature type="compositionally biased region" description="Basic residues" evidence="2">
    <location>
        <begin position="1"/>
        <end position="22"/>
    </location>
</feature>
<reference key="1">
    <citation type="journal article" date="2004" name="Proc. Natl. Acad. Sci. U.S.A.">
        <title>Genome sequence of the enterobacterial phytopathogen Erwinia carotovora subsp. atroseptica and characterization of virulence factors.</title>
        <authorList>
            <person name="Bell K.S."/>
            <person name="Sebaihia M."/>
            <person name="Pritchard L."/>
            <person name="Holden M.T.G."/>
            <person name="Hyman L.J."/>
            <person name="Holeva M.C."/>
            <person name="Thomson N.R."/>
            <person name="Bentley S.D."/>
            <person name="Churcher L.J.C."/>
            <person name="Mungall K."/>
            <person name="Atkin R."/>
            <person name="Bason N."/>
            <person name="Brooks K."/>
            <person name="Chillingworth T."/>
            <person name="Clark K."/>
            <person name="Doggett J."/>
            <person name="Fraser A."/>
            <person name="Hance Z."/>
            <person name="Hauser H."/>
            <person name="Jagels K."/>
            <person name="Moule S."/>
            <person name="Norbertczak H."/>
            <person name="Ormond D."/>
            <person name="Price C."/>
            <person name="Quail M.A."/>
            <person name="Sanders M."/>
            <person name="Walker D."/>
            <person name="Whitehead S."/>
            <person name="Salmond G.P.C."/>
            <person name="Birch P.R.J."/>
            <person name="Parkhill J."/>
            <person name="Toth I.K."/>
        </authorList>
    </citation>
    <scope>NUCLEOTIDE SEQUENCE [LARGE SCALE GENOMIC DNA]</scope>
    <source>
        <strain>SCRI 1043 / ATCC BAA-672</strain>
    </source>
</reference>
<name>RS20_PECAS</name>